<evidence type="ECO:0000269" key="1">
    <source>
    </source>
</evidence>
<evidence type="ECO:0000269" key="2">
    <source>
    </source>
</evidence>
<evidence type="ECO:0000269" key="3">
    <source>
    </source>
</evidence>
<evidence type="ECO:0000269" key="4">
    <source>
    </source>
</evidence>
<evidence type="ECO:0000269" key="5">
    <source>
    </source>
</evidence>
<evidence type="ECO:0000269" key="6">
    <source>
    </source>
</evidence>
<evidence type="ECO:0000269" key="7">
    <source>
    </source>
</evidence>
<evidence type="ECO:0007829" key="8">
    <source>
        <dbReference type="PDB" id="3VU9"/>
    </source>
</evidence>
<evidence type="ECO:0007829" key="9">
    <source>
        <dbReference type="PDB" id="4EQ6"/>
    </source>
</evidence>
<evidence type="ECO:0007829" key="10">
    <source>
        <dbReference type="PDB" id="5XYN"/>
    </source>
</evidence>
<dbReference type="EMBL" id="Z27407">
    <property type="protein sequence ID" value="CAA81795.1"/>
    <property type="molecule type" value="Genomic_DNA"/>
</dbReference>
<dbReference type="EMBL" id="U19103">
    <property type="protein sequence ID" value="AAB67578.1"/>
    <property type="molecule type" value="Genomic_DNA"/>
</dbReference>
<dbReference type="EMBL" id="AY692738">
    <property type="protein sequence ID" value="AAT92757.1"/>
    <property type="molecule type" value="Genomic_DNA"/>
</dbReference>
<dbReference type="EMBL" id="BK006945">
    <property type="protein sequence ID" value="DAA09678.1"/>
    <property type="molecule type" value="Genomic_DNA"/>
</dbReference>
<dbReference type="PIR" id="S47544">
    <property type="entry name" value="S47544"/>
</dbReference>
<dbReference type="RefSeq" id="NP_013480.1">
    <property type="nucleotide sequence ID" value="NM_001182265.1"/>
</dbReference>
<dbReference type="PDB" id="3VU9">
    <property type="method" value="X-ray"/>
    <property type="resolution" value="1.75 A"/>
    <property type="chains" value="A=1-242"/>
</dbReference>
<dbReference type="PDB" id="4DT1">
    <property type="method" value="X-ray"/>
    <property type="resolution" value="1.90 A"/>
    <property type="chains" value="B=1-242"/>
</dbReference>
<dbReference type="PDB" id="4EQ6">
    <property type="method" value="X-ray"/>
    <property type="resolution" value="1.80 A"/>
    <property type="chains" value="B=1-242"/>
</dbReference>
<dbReference type="PDB" id="5XYN">
    <property type="method" value="X-ray"/>
    <property type="resolution" value="3.30 A"/>
    <property type="chains" value="A=1-242"/>
</dbReference>
<dbReference type="PDBsum" id="3VU9"/>
<dbReference type="PDBsum" id="4DT1"/>
<dbReference type="PDBsum" id="4EQ6"/>
<dbReference type="PDBsum" id="5XYN"/>
<dbReference type="SMR" id="Q12318"/>
<dbReference type="BioGRID" id="31635">
    <property type="interactions" value="82"/>
</dbReference>
<dbReference type="ComplexPortal" id="CPX-3087">
    <property type="entry name" value="Shu complex"/>
</dbReference>
<dbReference type="DIP" id="DIP-1903N"/>
<dbReference type="FunCoup" id="Q12318">
    <property type="interactions" value="32"/>
</dbReference>
<dbReference type="IntAct" id="Q12318">
    <property type="interactions" value="6"/>
</dbReference>
<dbReference type="MINT" id="Q12318"/>
<dbReference type="STRING" id="4932.YLR376C"/>
<dbReference type="iPTMnet" id="Q12318"/>
<dbReference type="PaxDb" id="4932-YLR376C"/>
<dbReference type="PeptideAtlas" id="Q12318"/>
<dbReference type="EnsemblFungi" id="YLR376C_mRNA">
    <property type="protein sequence ID" value="YLR376C"/>
    <property type="gene ID" value="YLR376C"/>
</dbReference>
<dbReference type="GeneID" id="851091"/>
<dbReference type="KEGG" id="sce:YLR376C"/>
<dbReference type="AGR" id="SGD:S000004368"/>
<dbReference type="SGD" id="S000004368">
    <property type="gene designation" value="PSY3"/>
</dbReference>
<dbReference type="VEuPathDB" id="FungiDB:YLR376C"/>
<dbReference type="eggNOG" id="ENOG502S12B">
    <property type="taxonomic scope" value="Eukaryota"/>
</dbReference>
<dbReference type="HOGENOM" id="CLU_103058_0_0_1"/>
<dbReference type="InParanoid" id="Q12318"/>
<dbReference type="OMA" id="AHCRVYP"/>
<dbReference type="OrthoDB" id="4055611at2759"/>
<dbReference type="BioCyc" id="YEAST:G3O-32444-MONOMER"/>
<dbReference type="BioGRID-ORCS" id="851091">
    <property type="hits" value="4 hits in 10 CRISPR screens"/>
</dbReference>
<dbReference type="EvolutionaryTrace" id="Q12318"/>
<dbReference type="PRO" id="PR:Q12318"/>
<dbReference type="Proteomes" id="UP000002311">
    <property type="component" value="Chromosome XII"/>
</dbReference>
<dbReference type="RNAct" id="Q12318">
    <property type="molecule type" value="protein"/>
</dbReference>
<dbReference type="GO" id="GO:0005737">
    <property type="term" value="C:cytoplasm"/>
    <property type="evidence" value="ECO:0007005"/>
    <property type="project" value="SGD"/>
</dbReference>
<dbReference type="GO" id="GO:0005829">
    <property type="term" value="C:cytosol"/>
    <property type="evidence" value="ECO:0007005"/>
    <property type="project" value="SGD"/>
</dbReference>
<dbReference type="GO" id="GO:0005634">
    <property type="term" value="C:nucleus"/>
    <property type="evidence" value="ECO:0000314"/>
    <property type="project" value="SGD"/>
</dbReference>
<dbReference type="GO" id="GO:0097196">
    <property type="term" value="C:Shu complex"/>
    <property type="evidence" value="ECO:0000314"/>
    <property type="project" value="SGD"/>
</dbReference>
<dbReference type="GO" id="GO:0035861">
    <property type="term" value="C:site of double-strand break"/>
    <property type="evidence" value="ECO:0000315"/>
    <property type="project" value="SGD"/>
</dbReference>
<dbReference type="GO" id="GO:0000730">
    <property type="term" value="P:DNA recombinase assembly"/>
    <property type="evidence" value="ECO:0000315"/>
    <property type="project" value="SGD"/>
</dbReference>
<dbReference type="GO" id="GO:0042275">
    <property type="term" value="P:error-free postreplication DNA repair"/>
    <property type="evidence" value="ECO:0000303"/>
    <property type="project" value="ComplexPortal"/>
</dbReference>
<dbReference type="GO" id="GO:0070987">
    <property type="term" value="P:error-free translesion synthesis"/>
    <property type="evidence" value="ECO:0000316"/>
    <property type="project" value="SGD"/>
</dbReference>
<dbReference type="GO" id="GO:1903112">
    <property type="term" value="P:positive regulation of single-strand break repair via homologous recombination"/>
    <property type="evidence" value="ECO:0000303"/>
    <property type="project" value="ComplexPortal"/>
</dbReference>
<dbReference type="GO" id="GO:0000725">
    <property type="term" value="P:recombinational repair"/>
    <property type="evidence" value="ECO:0000315"/>
    <property type="project" value="SGD"/>
</dbReference>
<dbReference type="CDD" id="cd19480">
    <property type="entry name" value="Psy3"/>
    <property type="match status" value="1"/>
</dbReference>
<dbReference type="Gene3D" id="3.40.50.300">
    <property type="entry name" value="P-loop containing nucleotide triphosphate hydrolases"/>
    <property type="match status" value="1"/>
</dbReference>
<dbReference type="InterPro" id="IPR027417">
    <property type="entry name" value="P-loop_NTPase"/>
</dbReference>
<dbReference type="InterPro" id="IPR031779">
    <property type="entry name" value="Psy3"/>
</dbReference>
<dbReference type="Pfam" id="PF16836">
    <property type="entry name" value="PSY3"/>
    <property type="match status" value="1"/>
</dbReference>
<gene>
    <name type="primary">PSY3</name>
    <name type="ordered locus">YLR376C</name>
    <name type="ORF">L8039.17</name>
</gene>
<accession>Q12318</accession>
<accession>D6VZ12</accession>
<name>PSY3_YEAST</name>
<protein>
    <recommendedName>
        <fullName>Platinum sensitivity protein 3</fullName>
    </recommendedName>
</protein>
<sequence>MEVLKNIRIYPLSNFITSTKNYINLPNELRNLISEEQESKLGFLHIIESDFKPSVALQKLVNCTTGDEKILIIDIVSIWSQQKQRQHGAIYMNSLSCINITGLIVFLELLYDSPMDALRRCQVDNFNFQLRGIVIDNLSFLNFESDKNYDVINLSKFEKLFKILRKLREFLGCWIITKSFPTDFYNGIENTLVDKWSIKRKSGVTLYPTKLPDSYMKGMDLIIYREVVDGRPQYRRIAALEE</sequence>
<reference key="1">
    <citation type="submission" date="1993-11" db="EMBL/GenBank/DDBJ databases">
        <title>A new open reading frame.</title>
        <authorList>
            <person name="Mercado J."/>
            <person name="Gancedo J.M."/>
        </authorList>
    </citation>
    <scope>NUCLEOTIDE SEQUENCE [GENOMIC DNA]</scope>
    <source>
        <strain>ATCC 28383 / FL100 / VTT C-80102</strain>
    </source>
</reference>
<reference key="2">
    <citation type="journal article" date="1997" name="Nature">
        <title>The nucleotide sequence of Saccharomyces cerevisiae chromosome XII.</title>
        <authorList>
            <person name="Johnston M."/>
            <person name="Hillier L.W."/>
            <person name="Riles L."/>
            <person name="Albermann K."/>
            <person name="Andre B."/>
            <person name="Ansorge W."/>
            <person name="Benes V."/>
            <person name="Brueckner M."/>
            <person name="Delius H."/>
            <person name="Dubois E."/>
            <person name="Duesterhoeft A."/>
            <person name="Entian K.-D."/>
            <person name="Floeth M."/>
            <person name="Goffeau A."/>
            <person name="Hebling U."/>
            <person name="Heumann K."/>
            <person name="Heuss-Neitzel D."/>
            <person name="Hilbert H."/>
            <person name="Hilger F."/>
            <person name="Kleine K."/>
            <person name="Koetter P."/>
            <person name="Louis E.J."/>
            <person name="Messenguy F."/>
            <person name="Mewes H.-W."/>
            <person name="Miosga T."/>
            <person name="Moestl D."/>
            <person name="Mueller-Auer S."/>
            <person name="Nentwich U."/>
            <person name="Obermaier B."/>
            <person name="Piravandi E."/>
            <person name="Pohl T.M."/>
            <person name="Portetelle D."/>
            <person name="Purnelle B."/>
            <person name="Rechmann S."/>
            <person name="Rieger M."/>
            <person name="Rinke M."/>
            <person name="Rose M."/>
            <person name="Scharfe M."/>
            <person name="Scherens B."/>
            <person name="Scholler P."/>
            <person name="Schwager C."/>
            <person name="Schwarz S."/>
            <person name="Underwood A.P."/>
            <person name="Urrestarazu L.A."/>
            <person name="Vandenbol M."/>
            <person name="Verhasselt P."/>
            <person name="Vierendeels F."/>
            <person name="Voet M."/>
            <person name="Volckaert G."/>
            <person name="Voss H."/>
            <person name="Wambutt R."/>
            <person name="Wedler E."/>
            <person name="Wedler H."/>
            <person name="Zimmermann F.K."/>
            <person name="Zollner A."/>
            <person name="Hani J."/>
            <person name="Hoheisel J.D."/>
        </authorList>
    </citation>
    <scope>NUCLEOTIDE SEQUENCE [LARGE SCALE GENOMIC DNA]</scope>
    <source>
        <strain>ATCC 204508 / S288c</strain>
    </source>
</reference>
<reference key="3">
    <citation type="journal article" date="2014" name="G3 (Bethesda)">
        <title>The reference genome sequence of Saccharomyces cerevisiae: Then and now.</title>
        <authorList>
            <person name="Engel S.R."/>
            <person name="Dietrich F.S."/>
            <person name="Fisk D.G."/>
            <person name="Binkley G."/>
            <person name="Balakrishnan R."/>
            <person name="Costanzo M.C."/>
            <person name="Dwight S.S."/>
            <person name="Hitz B.C."/>
            <person name="Karra K."/>
            <person name="Nash R.S."/>
            <person name="Weng S."/>
            <person name="Wong E.D."/>
            <person name="Lloyd P."/>
            <person name="Skrzypek M.S."/>
            <person name="Miyasato S.R."/>
            <person name="Simison M."/>
            <person name="Cherry J.M."/>
        </authorList>
    </citation>
    <scope>GENOME REANNOTATION</scope>
    <source>
        <strain>ATCC 204508 / S288c</strain>
    </source>
</reference>
<reference key="4">
    <citation type="journal article" date="2007" name="Genome Res.">
        <title>Approaching a complete repository of sequence-verified protein-encoding clones for Saccharomyces cerevisiae.</title>
        <authorList>
            <person name="Hu Y."/>
            <person name="Rolfs A."/>
            <person name="Bhullar B."/>
            <person name="Murthy T.V.S."/>
            <person name="Zhu C."/>
            <person name="Berger M.F."/>
            <person name="Camargo A.A."/>
            <person name="Kelley F."/>
            <person name="McCarron S."/>
            <person name="Jepson D."/>
            <person name="Richardson A."/>
            <person name="Raphael J."/>
            <person name="Moreira D."/>
            <person name="Taycher E."/>
            <person name="Zuo D."/>
            <person name="Mohr S."/>
            <person name="Kane M.F."/>
            <person name="Williamson J."/>
            <person name="Simpson A.J.G."/>
            <person name="Bulyk M.L."/>
            <person name="Harlow E."/>
            <person name="Marsischky G."/>
            <person name="Kolodner R.D."/>
            <person name="LaBaer J."/>
        </authorList>
    </citation>
    <scope>NUCLEOTIDE SEQUENCE [GENOMIC DNA]</scope>
    <source>
        <strain>ATCC 204508 / S288c</strain>
    </source>
</reference>
<reference key="5">
    <citation type="journal article" date="2002" name="Proc. Natl. Acad. Sci. U.S.A.">
        <title>Previously uncharacterized genes in the UV- and MMS-induced DNA damage response in yeast.</title>
        <authorList>
            <person name="Hanway D."/>
            <person name="Chin J.K."/>
            <person name="Xia G."/>
            <person name="Oshiro G."/>
            <person name="Winzeler E.A."/>
            <person name="Romesberg F.E."/>
        </authorList>
    </citation>
    <scope>FUNCTION</scope>
</reference>
<reference key="6">
    <citation type="journal article" date="2002" name="Proc. Natl. Acad. Sci. U.S.A.">
        <title>A genome-wide screen for methyl methanesulfonate-sensitive mutants reveals genes required for S phase progression in the presence of DNA damage.</title>
        <authorList>
            <person name="Chang M."/>
            <person name="Bellaoui M."/>
            <person name="Boone C."/>
            <person name="Brown G.W."/>
        </authorList>
    </citation>
    <scope>FUNCTION IN MMS RESISTANCE</scope>
</reference>
<reference key="7">
    <citation type="journal article" date="2003" name="Nature">
        <title>Global analysis of protein expression in yeast.</title>
        <authorList>
            <person name="Ghaemmaghami S."/>
            <person name="Huh W.-K."/>
            <person name="Bower K."/>
            <person name="Howson R.W."/>
            <person name="Belle A."/>
            <person name="Dephoure N."/>
            <person name="O'Shea E.K."/>
            <person name="Weissman J.S."/>
        </authorList>
    </citation>
    <scope>LEVEL OF PROTEIN EXPRESSION [LARGE SCALE ANALYSIS]</scope>
</reference>
<reference key="8">
    <citation type="journal article" date="2003" name="Proc. Natl. Acad. Sci. U.S.A.">
        <title>A genomewide screen in Saccharomyces cerevisiae for genes that suppress the accumulation of mutations.</title>
        <authorList>
            <person name="Huang M.-E."/>
            <person name="Rio A.-G."/>
            <person name="Nicolas A."/>
            <person name="Kolodner R.D."/>
        </authorList>
    </citation>
    <scope>FUNCTION IN MUTATION SUPPRESSION</scope>
</reference>
<reference key="9">
    <citation type="journal article" date="2004" name="Cancer Res.">
        <title>Genome-wide identification of genes conferring resistance to the anticancer agents cisplatin, oxaliplatin, and mitomycin C.</title>
        <authorList>
            <person name="Wu H.I."/>
            <person name="Brown J.A."/>
            <person name="Dorie M.J."/>
            <person name="Lazzeroni L."/>
            <person name="Brown J.M."/>
        </authorList>
    </citation>
    <scope>FUNCTION</scope>
</reference>
<reference key="10">
    <citation type="journal article" date="2005" name="Genetics">
        <title>A genetic screen for top3 suppressors in Saccharomyces cerevisiae identifies SHU1, SHU2, PSY3 and CSM2: four genes involved in error-free DNA repair.</title>
        <authorList>
            <person name="Shor E."/>
            <person name="Weinstein J."/>
            <person name="Rothstein R."/>
        </authorList>
    </citation>
    <scope>IDENTIFICATION IN THE SHU COMPLEX</scope>
    <scope>SUBCELLULAR LOCATION</scope>
    <scope>FUNCTION</scope>
</reference>
<reference key="11">
    <citation type="journal article" date="2009" name="Mol. Microbiol.">
        <title>The yeast Shu complex couples error-free post-replication repair to homologous recombination.</title>
        <authorList>
            <person name="Ball L.G."/>
            <person name="Zhang K."/>
            <person name="Cobb J.A."/>
            <person name="Boone C."/>
            <person name="Xiao W."/>
        </authorList>
    </citation>
    <scope>IDENTIFICATION IN THE SHU COMPLEX</scope>
    <scope>FUNCTION</scope>
</reference>
<reference key="12">
    <citation type="journal article" date="2012" name="Proc. Natl. Acad. Sci. U.S.A.">
        <title>N-terminal acetylome analyses and functional insights of the N-terminal acetyltransferase NatB.</title>
        <authorList>
            <person name="Van Damme P."/>
            <person name="Lasa M."/>
            <person name="Polevoda B."/>
            <person name="Gazquez C."/>
            <person name="Elosegui-Artola A."/>
            <person name="Kim D.S."/>
            <person name="De Juan-Pardo E."/>
            <person name="Demeyer K."/>
            <person name="Hole K."/>
            <person name="Larrea E."/>
            <person name="Timmerman E."/>
            <person name="Prieto J."/>
            <person name="Arnesen T."/>
            <person name="Sherman F."/>
            <person name="Gevaert K."/>
            <person name="Aldabe R."/>
        </authorList>
    </citation>
    <scope>IDENTIFICATION BY MASS SPECTROMETRY [LARGE SCALE ANALYSIS]</scope>
</reference>
<feature type="chain" id="PRO_0000262753" description="Platinum sensitivity protein 3">
    <location>
        <begin position="1"/>
        <end position="242"/>
    </location>
</feature>
<feature type="helix" evidence="9">
    <location>
        <begin position="2"/>
        <end position="6"/>
    </location>
</feature>
<feature type="strand" evidence="10">
    <location>
        <begin position="9"/>
        <end position="11"/>
    </location>
</feature>
<feature type="helix" evidence="8">
    <location>
        <begin position="12"/>
        <end position="16"/>
    </location>
</feature>
<feature type="helix" evidence="8">
    <location>
        <begin position="27"/>
        <end position="29"/>
    </location>
</feature>
<feature type="strand" evidence="8">
    <location>
        <begin position="31"/>
        <end position="33"/>
    </location>
</feature>
<feature type="helix" evidence="8">
    <location>
        <begin position="35"/>
        <end position="38"/>
    </location>
</feature>
<feature type="strand" evidence="8">
    <location>
        <begin position="43"/>
        <end position="47"/>
    </location>
</feature>
<feature type="helix" evidence="8">
    <location>
        <begin position="55"/>
        <end position="61"/>
    </location>
</feature>
<feature type="strand" evidence="8">
    <location>
        <begin position="66"/>
        <end position="74"/>
    </location>
</feature>
<feature type="helix" evidence="8">
    <location>
        <begin position="82"/>
        <end position="84"/>
    </location>
</feature>
<feature type="strand" evidence="8">
    <location>
        <begin position="89"/>
        <end position="92"/>
    </location>
</feature>
<feature type="strand" evidence="8">
    <location>
        <begin position="97"/>
        <end position="99"/>
    </location>
</feature>
<feature type="helix" evidence="8">
    <location>
        <begin position="100"/>
        <end position="112"/>
    </location>
</feature>
<feature type="helix" evidence="8">
    <location>
        <begin position="114"/>
        <end position="120"/>
    </location>
</feature>
<feature type="strand" evidence="8">
    <location>
        <begin position="128"/>
        <end position="136"/>
    </location>
</feature>
<feature type="helix" evidence="8">
    <location>
        <begin position="138"/>
        <end position="140"/>
    </location>
</feature>
<feature type="helix" evidence="8">
    <location>
        <begin position="152"/>
        <end position="171"/>
    </location>
</feature>
<feature type="strand" evidence="8">
    <location>
        <begin position="174"/>
        <end position="179"/>
    </location>
</feature>
<feature type="helix" evidence="8">
    <location>
        <begin position="182"/>
        <end position="185"/>
    </location>
</feature>
<feature type="turn" evidence="8">
    <location>
        <begin position="189"/>
        <end position="192"/>
    </location>
</feature>
<feature type="helix" evidence="8">
    <location>
        <begin position="213"/>
        <end position="216"/>
    </location>
</feature>
<feature type="strand" evidence="8">
    <location>
        <begin position="220"/>
        <end position="236"/>
    </location>
</feature>
<organism>
    <name type="scientific">Saccharomyces cerevisiae (strain ATCC 204508 / S288c)</name>
    <name type="common">Baker's yeast</name>
    <dbReference type="NCBI Taxonomy" id="559292"/>
    <lineage>
        <taxon>Eukaryota</taxon>
        <taxon>Fungi</taxon>
        <taxon>Dikarya</taxon>
        <taxon>Ascomycota</taxon>
        <taxon>Saccharomycotina</taxon>
        <taxon>Saccharomycetes</taxon>
        <taxon>Saccharomycetales</taxon>
        <taxon>Saccharomycetaceae</taxon>
        <taxon>Saccharomyces</taxon>
    </lineage>
</organism>
<keyword id="KW-0002">3D-structure</keyword>
<keyword id="KW-0227">DNA damage</keyword>
<keyword id="KW-0234">DNA repair</keyword>
<keyword id="KW-0539">Nucleus</keyword>
<keyword id="KW-1185">Reference proteome</keyword>
<comment type="function">
    <text evidence="1 2 3 5 6 7">Required for resistance to the DNA-damaging agents methyl methanesulfonate (MMS), cisplatin and oxaliplatin, but not to mitomycin C. Plays a role in protection against mutation accumulation. May be a component of the recombination-repair pathway.</text>
</comment>
<comment type="subunit">
    <text evidence="6 7">Component of the SHU complex composed of at least CSM2, PSY3, SHU1 and SHU2.</text>
</comment>
<comment type="interaction">
    <interactant intactId="EBI-37340">
        <id>Q12318</id>
    </interactant>
    <interactant intactId="EBI-25229">
        <id>P40465</id>
        <label>CSM2</label>
    </interactant>
    <organismsDiffer>false</organismsDiffer>
    <experiments>4</experiments>
</comment>
<comment type="subcellular location">
    <subcellularLocation>
        <location evidence="6">Nucleus</location>
    </subcellularLocation>
</comment>
<comment type="miscellaneous">
    <text evidence="4">Present with 876 molecules/cell in log phase SD medium.</text>
</comment>
<proteinExistence type="evidence at protein level"/>